<name>HCHA_ECOLI</name>
<evidence type="ECO:0000255" key="1">
    <source>
        <dbReference type="HAMAP-Rule" id="MF_01046"/>
    </source>
</evidence>
<evidence type="ECO:0000269" key="2">
    <source>
    </source>
</evidence>
<evidence type="ECO:0000269" key="3">
    <source>
    </source>
</evidence>
<evidence type="ECO:0000269" key="4">
    <source>
    </source>
</evidence>
<evidence type="ECO:0000269" key="5">
    <source>
    </source>
</evidence>
<evidence type="ECO:0000269" key="6">
    <source>
    </source>
</evidence>
<evidence type="ECO:0000269" key="7">
    <source>
    </source>
</evidence>
<evidence type="ECO:0000269" key="8">
    <source>
    </source>
</evidence>
<evidence type="ECO:0000269" key="9">
    <source>
    </source>
</evidence>
<evidence type="ECO:0000269" key="10">
    <source>
    </source>
</evidence>
<evidence type="ECO:0000269" key="11">
    <source>
    </source>
</evidence>
<evidence type="ECO:0000269" key="12">
    <source>
    </source>
</evidence>
<evidence type="ECO:0000269" key="13">
    <source>
    </source>
</evidence>
<evidence type="ECO:0000269" key="14">
    <source>
    </source>
</evidence>
<evidence type="ECO:0000269" key="15">
    <source>
    </source>
</evidence>
<evidence type="ECO:0000269" key="16">
    <source>
    </source>
</evidence>
<evidence type="ECO:0000303" key="17">
    <source>
    </source>
</evidence>
<evidence type="ECO:0000303" key="18">
    <source>
    </source>
</evidence>
<evidence type="ECO:0000303" key="19">
    <source>
    </source>
</evidence>
<evidence type="ECO:0000303" key="20">
    <source>
    </source>
</evidence>
<evidence type="ECO:0000303" key="21">
    <source>
    </source>
</evidence>
<evidence type="ECO:0000305" key="22"/>
<evidence type="ECO:0000305" key="23">
    <source>
    </source>
</evidence>
<evidence type="ECO:0000305" key="24">
    <source>
    </source>
</evidence>
<evidence type="ECO:0000305" key="25">
    <source>
    </source>
</evidence>
<evidence type="ECO:0000305" key="26">
    <source>
    </source>
</evidence>
<evidence type="ECO:0007744" key="27">
    <source>
        <dbReference type="PDB" id="1IZY"/>
    </source>
</evidence>
<evidence type="ECO:0007744" key="28">
    <source>
        <dbReference type="PDB" id="1IZZ"/>
    </source>
</evidence>
<evidence type="ECO:0007744" key="29">
    <source>
        <dbReference type="PDB" id="1N57"/>
    </source>
</evidence>
<evidence type="ECO:0007744" key="30">
    <source>
        <dbReference type="PDB" id="1ONS"/>
    </source>
</evidence>
<evidence type="ECO:0007744" key="31">
    <source>
        <dbReference type="PDB" id="1PV2"/>
    </source>
</evidence>
<evidence type="ECO:0007829" key="32">
    <source>
        <dbReference type="PDB" id="1IZY"/>
    </source>
</evidence>
<evidence type="ECO:0007829" key="33">
    <source>
        <dbReference type="PDB" id="1IZZ"/>
    </source>
</evidence>
<evidence type="ECO:0007829" key="34">
    <source>
        <dbReference type="PDB" id="1N57"/>
    </source>
</evidence>
<evidence type="ECO:0007829" key="35">
    <source>
        <dbReference type="PDB" id="1ONS"/>
    </source>
</evidence>
<organism>
    <name type="scientific">Escherichia coli (strain K12)</name>
    <dbReference type="NCBI Taxonomy" id="83333"/>
    <lineage>
        <taxon>Bacteria</taxon>
        <taxon>Pseudomonadati</taxon>
        <taxon>Pseudomonadota</taxon>
        <taxon>Gammaproteobacteria</taxon>
        <taxon>Enterobacterales</taxon>
        <taxon>Enterobacteriaceae</taxon>
        <taxon>Escherichia</taxon>
    </lineage>
</organism>
<keyword id="KW-0002">3D-structure</keyword>
<keyword id="KW-0143">Chaperone</keyword>
<keyword id="KW-0963">Cytoplasm</keyword>
<keyword id="KW-0903">Direct protein sequencing</keyword>
<keyword id="KW-0227">DNA damage</keyword>
<keyword id="KW-0234">DNA repair</keyword>
<keyword id="KW-0378">Hydrolase</keyword>
<keyword id="KW-0456">Lyase</keyword>
<keyword id="KW-0479">Metal-binding</keyword>
<keyword id="KW-1185">Reference proteome</keyword>
<keyword id="KW-0346">Stress response</keyword>
<keyword id="KW-0862">Zinc</keyword>
<reference key="1">
    <citation type="journal article" date="1996" name="DNA Res.">
        <title>A 460-kb DNA sequence of the Escherichia coli K-12 genome corresponding to the 40.1-50.0 min region on the linkage map.</title>
        <authorList>
            <person name="Itoh T."/>
            <person name="Aiba H."/>
            <person name="Baba T."/>
            <person name="Fujita K."/>
            <person name="Hayashi K."/>
            <person name="Inada T."/>
            <person name="Isono K."/>
            <person name="Kasai H."/>
            <person name="Kimura S."/>
            <person name="Kitakawa M."/>
            <person name="Kitagawa M."/>
            <person name="Makino K."/>
            <person name="Miki T."/>
            <person name="Mizobuchi K."/>
            <person name="Mori H."/>
            <person name="Mori T."/>
            <person name="Motomura K."/>
            <person name="Nakade S."/>
            <person name="Nakamura Y."/>
            <person name="Nashimoto H."/>
            <person name="Nishio Y."/>
            <person name="Oshima T."/>
            <person name="Saito N."/>
            <person name="Sampei G."/>
            <person name="Seki Y."/>
            <person name="Sivasundaram S."/>
            <person name="Tagami H."/>
            <person name="Takeda J."/>
            <person name="Takemoto K."/>
            <person name="Wada C."/>
            <person name="Yamamoto Y."/>
            <person name="Horiuchi T."/>
        </authorList>
    </citation>
    <scope>NUCLEOTIDE SEQUENCE [LARGE SCALE GENOMIC DNA]</scope>
    <source>
        <strain>K12 / W3110 / ATCC 27325 / DSM 5911</strain>
    </source>
</reference>
<reference key="2">
    <citation type="journal article" date="1997" name="Science">
        <title>The complete genome sequence of Escherichia coli K-12.</title>
        <authorList>
            <person name="Blattner F.R."/>
            <person name="Plunkett G. III"/>
            <person name="Bloch C.A."/>
            <person name="Perna N.T."/>
            <person name="Burland V."/>
            <person name="Riley M."/>
            <person name="Collado-Vides J."/>
            <person name="Glasner J.D."/>
            <person name="Rode C.K."/>
            <person name="Mayhew G.F."/>
            <person name="Gregor J."/>
            <person name="Davis N.W."/>
            <person name="Kirkpatrick H.A."/>
            <person name="Goeden M.A."/>
            <person name="Rose D.J."/>
            <person name="Mau B."/>
            <person name="Shao Y."/>
        </authorList>
    </citation>
    <scope>NUCLEOTIDE SEQUENCE [LARGE SCALE GENOMIC DNA]</scope>
    <source>
        <strain>K12 / MG1655 / ATCC 47076</strain>
    </source>
</reference>
<reference key="3">
    <citation type="journal article" date="2006" name="Mol. Syst. Biol.">
        <title>Highly accurate genome sequences of Escherichia coli K-12 strains MG1655 and W3110.</title>
        <authorList>
            <person name="Hayashi K."/>
            <person name="Morooka N."/>
            <person name="Yamamoto Y."/>
            <person name="Fujita K."/>
            <person name="Isono K."/>
            <person name="Choi S."/>
            <person name="Ohtsubo E."/>
            <person name="Baba T."/>
            <person name="Wanner B.L."/>
            <person name="Mori H."/>
            <person name="Horiuchi T."/>
        </authorList>
    </citation>
    <scope>NUCLEOTIDE SEQUENCE [LARGE SCALE GENOMIC DNA]</scope>
    <source>
        <strain>K12 / W3110 / ATCC 27325 / DSM 5911</strain>
    </source>
</reference>
<reference key="4">
    <citation type="journal article" date="1993" name="Mol. Gen. Genet.">
        <title>Function of the Escherichia coli nucleoid protein, H-NS: molecular analysis of a subset of proteins whose expression is enhanced in a hns deletion mutant.</title>
        <authorList>
            <person name="Yoshida T."/>
            <person name="Ueguchi C."/>
            <person name="Yamada H."/>
            <person name="Mizuno T."/>
        </authorList>
    </citation>
    <scope>PROTEIN SEQUENCE OF 2-21</scope>
    <source>
        <strain>K12</strain>
    </source>
</reference>
<reference key="5">
    <citation type="journal article" date="1995" name="Biochem. J.">
        <title>Glyoxalase III from Escherichia coli: a single novel enzyme for the conversion of methylglyoxal into D-lactate without reduced glutathione.</title>
        <authorList>
            <person name="Misra K."/>
            <person name="Banerjee A.B."/>
            <person name="Ray S."/>
            <person name="Ray M."/>
        </authorList>
    </citation>
    <scope>FUNCTION AS A GLYOXALASE</scope>
    <scope>CATALYTIC ACTIVITY</scope>
    <scope>SUBSTRATE SPECIFICITY</scope>
    <scope>ACTIVITY REGULATION</scope>
    <scope>BIOPHYSICOCHEMICAL PROPERTIES</scope>
    <scope>SUBUNIT</scope>
</reference>
<reference key="6">
    <citation type="journal article" date="2002" name="J. Biol. Chem.">
        <title>Hsp31, the Escherichia coli yedU gene product, is a molecular chaperone whose activity is inhibited by ATP at high temperatures.</title>
        <authorList>
            <person name="Sastry M.S.R."/>
            <person name="Korotkov K."/>
            <person name="Brodsky Y."/>
            <person name="Baneyx F."/>
        </authorList>
    </citation>
    <scope>FUNCTION AS A CHAPERONE</scope>
    <scope>SUBUNIT</scope>
    <scope>ACTIVITY REGULATION</scope>
    <source>
        <strain>K12 / MC4100 / ATCC 35695 / DSM 6574</strain>
    </source>
</reference>
<reference key="7">
    <citation type="journal article" date="2003" name="Biochem. Biophys. Res. Commun.">
        <title>Characterization of the Escherichia coli YedU protein as a molecular chaperone.</title>
        <authorList>
            <person name="Malki A."/>
            <person name="Kern R."/>
            <person name="Abdallah J."/>
            <person name="Richarme G."/>
        </authorList>
    </citation>
    <scope>FUNCTION AS A CHAPERONE</scope>
    <scope>SUBUNIT</scope>
</reference>
<reference key="8">
    <citation type="journal article" date="2004" name="Mol. Microbiol.">
        <title>Escherichia coli Hsp31 functions as a holding chaperone that cooperates with the DnaK-DnaJ-GrpE system in the management of protein misfolding under severe stress conditions.</title>
        <authorList>
            <person name="Mujacic M."/>
            <person name="Bader M.W."/>
            <person name="Baneyx F."/>
        </authorList>
    </citation>
    <scope>FUNCTION AS A CHAPERONE</scope>
    <scope>DISRUPTION PHENOTYPE</scope>
    <source>
        <strain>K12 / MC4100 / ATCC 35695 / DSM 6574</strain>
    </source>
</reference>
<reference key="9">
    <citation type="journal article" date="2004" name="Proc. Natl. Acad. Sci. U.S.A.">
        <title>The linker-loop region of Escherichia coli chaperone Hsp31 functions as a gate that modulates high-affinity substrate binding at elevated temperatures.</title>
        <authorList>
            <person name="Sastry M.S.R."/>
            <person name="Quigley P.M."/>
            <person name="Hol W.G.J."/>
            <person name="Baneyx F."/>
        </authorList>
    </citation>
    <scope>DOMAIN</scope>
</reference>
<reference key="10">
    <citation type="journal article" date="2005" name="J. Biol. Chem.">
        <title>Peptidase activity of the Escherichia coli Hsp31 chaperone.</title>
        <authorList>
            <person name="Malki A."/>
            <person name="Caldas T."/>
            <person name="Abdallah J."/>
            <person name="Kern R."/>
            <person name="Eckey V."/>
            <person name="Kim S.J."/>
            <person name="Cha S.S."/>
            <person name="Mori H."/>
            <person name="Richarme G."/>
        </authorList>
    </citation>
    <scope>FUNCTION AS AN AMINOPEPTIDASE</scope>
    <scope>BIOPHYSICOCHEMICAL PROPERTIES</scope>
    <scope>ACTIVITY REGULATION</scope>
    <scope>DISRUPTION PHENOTYPE</scope>
    <scope>MUTAGENESIS OF CYS-185</scope>
</reference>
<reference key="11">
    <citation type="journal article" date="2006" name="Mol. Microbiol.">
        <title>Regulation of Escherichia coli hchA, a stress-inducible gene encoding molecular chaperone Hsp31.</title>
        <authorList>
            <person name="Mujacic M."/>
            <person name="Baneyx F."/>
        </authorList>
    </citation>
    <scope>FUNCTION IN STRESS RESISTANCE</scope>
</reference>
<reference key="12">
    <citation type="journal article" date="2007" name="Appl. Environ. Microbiol.">
        <title>Chaperone Hsp31 contributes to acid resistance in stationary-phase Escherichia coli.</title>
        <authorList>
            <person name="Mujacic M."/>
            <person name="Baneyx F."/>
        </authorList>
    </citation>
    <scope>FUNCTION IN ACID STRESS RESISTANCE</scope>
</reference>
<reference key="13">
    <citation type="journal article" date="2011" name="Mol. Microbiol.">
        <title>Hsp31 of Escherichia coli K-12 is glyoxalase III.</title>
        <authorList>
            <person name="Subedi K.P."/>
            <person name="Choi D."/>
            <person name="Kim I."/>
            <person name="Min B."/>
            <person name="Park C."/>
        </authorList>
    </citation>
    <scope>FUNCTION AS A GLYOXALASE</scope>
    <scope>CATALYTIC ACTIVITY</scope>
    <scope>MUTAGENESIS OF GLU-77; CYS-185 AND HIS-186</scope>
    <scope>DISRUPTION PHENOTYPE</scope>
    <scope>ACTIVITY REGULATION</scope>
    <scope>BIOPHYSICOCHEMICAL PROPERTIES</scope>
    <source>
        <strain>K12 / MG1655 / ATCC 47076</strain>
    </source>
</reference>
<reference key="14">
    <citation type="journal article" date="2002" name="Acta Crystallogr. D">
        <title>Crystallization and preliminary X-ray crystallographic analysis of a yedU gene product from Escherichia coli.</title>
        <authorList>
            <person name="Kim O.-G."/>
            <person name="Kim I.-K."/>
            <person name="Kim G.-H."/>
            <person name="Ko J."/>
            <person name="Park C."/>
            <person name="Suh P.-G."/>
            <person name="Kang S.-O."/>
            <person name="Lee H.-S."/>
            <person name="Cha S.-S."/>
        </authorList>
    </citation>
    <scope>CRYSTALLIZATION</scope>
</reference>
<reference key="15">
    <citation type="journal article" date="2015" name="Biochem. Biophys. Res. Commun.">
        <title>The DJ-1 superfamily member Hsp31 repairs proteins from glycation by methylglyoxal and glyoxal.</title>
        <authorList>
            <person name="Mihoub M."/>
            <person name="Abdallah J."/>
            <person name="Gontero B."/>
            <person name="Dairou J."/>
            <person name="Richarme G."/>
        </authorList>
    </citation>
    <scope>FUNCTION AS A PROTEIN DEGLYCASE</scope>
    <scope>CATALYTIC ACTIVITY</scope>
    <scope>DISRUPTION PHENOTYPE</scope>
</reference>
<reference key="16">
    <citation type="journal article" date="2016" name="Biochem. Biophys. Res. Commun.">
        <title>The DJ-1 superfamily members YhbO and YajL from Escherichia coli repair proteins from glycation by methylglyoxal and glyoxal.</title>
        <authorList>
            <person name="Abdallah J."/>
            <person name="Mihoub M."/>
            <person name="Gautier V."/>
            <person name="Richarme G."/>
        </authorList>
    </citation>
    <scope>FUNCTION AS A PROTEIN DEGLYCASE</scope>
    <scope>CATALYTIC ACTIVITY</scope>
    <scope>DISRUPTION PHENOTYPE</scope>
    <source>
        <strain>K12 / MG1655 / ATCC 47076</strain>
    </source>
</reference>
<reference key="17">
    <citation type="journal article" date="2017" name="Science">
        <title>Guanine glycation repair by DJ-1/Park7 and its bacterial homologs.</title>
        <authorList>
            <person name="Richarme G."/>
            <person name="Liu C."/>
            <person name="Mihoub M."/>
            <person name="Abdallah J."/>
            <person name="Leger T."/>
            <person name="Joly N."/>
            <person name="Liebart J.C."/>
            <person name="Jurkunas U.V."/>
            <person name="Nadal M."/>
            <person name="Bouloc P."/>
            <person name="Dairou J."/>
            <person name="Lamouri A."/>
        </authorList>
    </citation>
    <scope>FUNCTION AS A NUCLEOTIDE DEGLYCASE</scope>
    <scope>CATALYTIC ACTIVITY</scope>
    <scope>DISRUPTION PHENOTYPE</scope>
    <source>
        <strain>K12 / BW25113</strain>
    </source>
</reference>
<reference evidence="27 28" key="18">
    <citation type="journal article" date="2003" name="J. Biol. Chem.">
        <title>Crystal structures of human DJ-1 and Escherichia coli Hsp31, which share an evolutionarily conserved domain.</title>
        <authorList>
            <person name="Lee S.-J."/>
            <person name="Kim S.J."/>
            <person name="Kim I.-K."/>
            <person name="Ko J."/>
            <person name="Jeong C.-S."/>
            <person name="Kim G.-H."/>
            <person name="Park C."/>
            <person name="Kang S.-O."/>
            <person name="Suh P.-G."/>
            <person name="Lee H.-S."/>
            <person name="Cha S.-S."/>
        </authorList>
    </citation>
    <scope>X-RAY CRYSTALLOGRAPHY (2.31 ANGSTROMS)</scope>
    <scope>PROTEOLYTIC ACTIVITY</scope>
    <scope>MUTAGENESIS OF CYS-185</scope>
</reference>
<reference evidence="29" key="19">
    <citation type="journal article" date="2003" name="Proc. Natl. Acad. Sci. U.S.A.">
        <title>The 1.6-A crystal structure of the class of chaperones represented by Escherichia coli Hsp31 reveals a putative catalytic triad.</title>
        <authorList>
            <person name="Quigley P.M."/>
            <person name="Korotkov K."/>
            <person name="Baneyx F."/>
            <person name="Hol W.G.J."/>
        </authorList>
    </citation>
    <scope>X-RAY CRYSTALLOGRAPHY (1.6 ANGSTROMS) OF 6-291</scope>
</reference>
<reference evidence="30" key="20">
    <citation type="journal article" date="2003" name="Protein Sci.">
        <title>The crystal structure of Escherichia coli heat shock protein YedU reveals three potential catalytic active sites.</title>
        <authorList>
            <person name="Zhao Y."/>
            <person name="Liu D."/>
            <person name="Kaluarachchi W.D."/>
            <person name="Bellamy H.D."/>
            <person name="White M.A."/>
            <person name="Fox R.O."/>
        </authorList>
    </citation>
    <scope>X-RAY CRYSTALLOGRAPHY (2.20 ANGSTROMS) OF 2-283 IN COMPLEX WITH ZINC</scope>
    <scope>METAL-BINDING</scope>
    <source>
        <strain>K12 / MG1655 / ATCC 47076</strain>
    </source>
</reference>
<reference evidence="31" key="21">
    <citation type="journal article" date="2004" name="Protein Sci.">
        <title>A new native EcHsp31 structure suggests a key role of structural flexibility for chaperone function.</title>
        <authorList>
            <person name="Quigley P.M."/>
            <person name="Korotkov K."/>
            <person name="Baneyx F."/>
            <person name="Hol W.G.J."/>
        </authorList>
    </citation>
    <scope>X-RAY CRYSTALLOGRAPHY (2.71 ANGSTROMS)</scope>
</reference>
<protein>
    <recommendedName>
        <fullName evidence="25 26">Protein/nucleic acid deglycase 1</fullName>
        <ecNumber evidence="12 13">3.1.2.-</ecNumber>
        <ecNumber evidence="14">3.5.1.-</ecNumber>
        <ecNumber evidence="12 13">3.5.1.124</ecNumber>
    </recommendedName>
    <alternativeName>
        <fullName evidence="19 21">Glyoxalase III</fullName>
        <ecNumber evidence="11 15">4.2.1.130</ecNumber>
    </alternativeName>
    <alternativeName>
        <fullName evidence="18">Holding molecular chaperone</fullName>
    </alternativeName>
    <alternativeName>
        <fullName evidence="17">Hsp31</fullName>
    </alternativeName>
    <alternativeName>
        <fullName evidence="20">Maillard deglycase</fullName>
    </alternativeName>
</protein>
<dbReference type="EC" id="3.1.2.-" evidence="12 13"/>
<dbReference type="EC" id="3.5.1.-" evidence="14"/>
<dbReference type="EC" id="3.5.1.124" evidence="12 13"/>
<dbReference type="EC" id="4.2.1.130" evidence="11 15"/>
<dbReference type="EMBL" id="U00096">
    <property type="protein sequence ID" value="AAC75033.1"/>
    <property type="molecule type" value="Genomic_DNA"/>
</dbReference>
<dbReference type="EMBL" id="AP009048">
    <property type="protein sequence ID" value="BAA15794.2"/>
    <property type="molecule type" value="Genomic_DNA"/>
</dbReference>
<dbReference type="PIR" id="C64961">
    <property type="entry name" value="C64961"/>
</dbReference>
<dbReference type="RefSeq" id="NP_416476.1">
    <property type="nucleotide sequence ID" value="NC_000913.3"/>
</dbReference>
<dbReference type="RefSeq" id="WP_000218212.1">
    <property type="nucleotide sequence ID" value="NZ_LN832404.1"/>
</dbReference>
<dbReference type="PDB" id="1IZY">
    <property type="method" value="X-ray"/>
    <property type="resolution" value="2.80 A"/>
    <property type="chains" value="A/B=1-283"/>
</dbReference>
<dbReference type="PDB" id="1IZZ">
    <property type="method" value="X-ray"/>
    <property type="resolution" value="2.31 A"/>
    <property type="chains" value="A=1-283"/>
</dbReference>
<dbReference type="PDB" id="1N57">
    <property type="method" value="X-ray"/>
    <property type="resolution" value="1.60 A"/>
    <property type="chains" value="A=1-283"/>
</dbReference>
<dbReference type="PDB" id="1ONS">
    <property type="method" value="X-ray"/>
    <property type="resolution" value="2.20 A"/>
    <property type="chains" value="A=2-283"/>
</dbReference>
<dbReference type="PDB" id="1PV2">
    <property type="method" value="X-ray"/>
    <property type="resolution" value="2.71 A"/>
    <property type="chains" value="A/B/C/D/E/F/G/H=1-283"/>
</dbReference>
<dbReference type="PDBsum" id="1IZY"/>
<dbReference type="PDBsum" id="1IZZ"/>
<dbReference type="PDBsum" id="1N57"/>
<dbReference type="PDBsum" id="1ONS"/>
<dbReference type="PDBsum" id="1PV2"/>
<dbReference type="SMR" id="P31658"/>
<dbReference type="BioGRID" id="4260394">
    <property type="interactions" value="58"/>
</dbReference>
<dbReference type="BioGRID" id="850832">
    <property type="interactions" value="1"/>
</dbReference>
<dbReference type="DIP" id="DIP-11851N"/>
<dbReference type="FunCoup" id="P31658">
    <property type="interactions" value="348"/>
</dbReference>
<dbReference type="IntAct" id="P31658">
    <property type="interactions" value="32"/>
</dbReference>
<dbReference type="STRING" id="511145.b1967"/>
<dbReference type="MEROPS" id="C56.006"/>
<dbReference type="MoonProt" id="P31658"/>
<dbReference type="jPOST" id="P31658"/>
<dbReference type="PaxDb" id="511145-b1967"/>
<dbReference type="EnsemblBacteria" id="AAC75033">
    <property type="protein sequence ID" value="AAC75033"/>
    <property type="gene ID" value="b1967"/>
</dbReference>
<dbReference type="GeneID" id="86946880"/>
<dbReference type="GeneID" id="946481"/>
<dbReference type="KEGG" id="ecj:JW1950"/>
<dbReference type="KEGG" id="eco:b1967"/>
<dbReference type="KEGG" id="ecoc:C3026_11115"/>
<dbReference type="PATRIC" id="fig|1411691.4.peg.283"/>
<dbReference type="EchoBASE" id="EB1705"/>
<dbReference type="eggNOG" id="COG0693">
    <property type="taxonomic scope" value="Bacteria"/>
</dbReference>
<dbReference type="InParanoid" id="P31658"/>
<dbReference type="OMA" id="IPGKMEW"/>
<dbReference type="OrthoDB" id="9792284at2"/>
<dbReference type="PhylomeDB" id="P31658"/>
<dbReference type="BioCyc" id="EcoCyc:G7055-MONOMER"/>
<dbReference type="BioCyc" id="MetaCyc:G7055-MONOMER"/>
<dbReference type="BRENDA" id="3.5.1.124">
    <property type="organism ID" value="2026"/>
</dbReference>
<dbReference type="BRENDA" id="4.2.1.130">
    <property type="organism ID" value="2026"/>
</dbReference>
<dbReference type="EvolutionaryTrace" id="P31658"/>
<dbReference type="PRO" id="PR:P31658"/>
<dbReference type="Proteomes" id="UP000000625">
    <property type="component" value="Chromosome"/>
</dbReference>
<dbReference type="GO" id="GO:0005737">
    <property type="term" value="C:cytoplasm"/>
    <property type="evidence" value="ECO:0000318"/>
    <property type="project" value="GO_Central"/>
</dbReference>
<dbReference type="GO" id="GO:0005829">
    <property type="term" value="C:cytosol"/>
    <property type="evidence" value="ECO:0000314"/>
    <property type="project" value="EcoCyc"/>
</dbReference>
<dbReference type="GO" id="GO:0019172">
    <property type="term" value="F:glyoxalase III activity"/>
    <property type="evidence" value="ECO:0000314"/>
    <property type="project" value="EcoCyc"/>
</dbReference>
<dbReference type="GO" id="GO:0036524">
    <property type="term" value="F:protein deglycase activity"/>
    <property type="evidence" value="ECO:0000314"/>
    <property type="project" value="EcoCyc"/>
</dbReference>
<dbReference type="GO" id="GO:0042803">
    <property type="term" value="F:protein homodimerization activity"/>
    <property type="evidence" value="ECO:0000314"/>
    <property type="project" value="EcoCyc"/>
</dbReference>
<dbReference type="GO" id="GO:0016790">
    <property type="term" value="F:thiolester hydrolase activity"/>
    <property type="evidence" value="ECO:0007669"/>
    <property type="project" value="UniProtKB-UniRule"/>
</dbReference>
<dbReference type="GO" id="GO:0008270">
    <property type="term" value="F:zinc ion binding"/>
    <property type="evidence" value="ECO:0007669"/>
    <property type="project" value="UniProtKB-UniRule"/>
</dbReference>
<dbReference type="GO" id="GO:0006281">
    <property type="term" value="P:DNA repair"/>
    <property type="evidence" value="ECO:0000315"/>
    <property type="project" value="EcoCyc"/>
</dbReference>
<dbReference type="GO" id="GO:0106044">
    <property type="term" value="P:guanine deglycation"/>
    <property type="evidence" value="ECO:0000314"/>
    <property type="project" value="EcoCyc"/>
</dbReference>
<dbReference type="GO" id="GO:0019243">
    <property type="term" value="P:methylglyoxal catabolic process to D-lactate via S-lactoyl-glutathione"/>
    <property type="evidence" value="ECO:0000315"/>
    <property type="project" value="EcoCyc"/>
</dbReference>
<dbReference type="GO" id="GO:0030091">
    <property type="term" value="P:protein repair"/>
    <property type="evidence" value="ECO:0000314"/>
    <property type="project" value="EcoCyc"/>
</dbReference>
<dbReference type="GO" id="GO:0010447">
    <property type="term" value="P:response to acidic pH"/>
    <property type="evidence" value="ECO:0000315"/>
    <property type="project" value="EcoCyc"/>
</dbReference>
<dbReference type="GO" id="GO:0051595">
    <property type="term" value="P:response to methylglyoxal"/>
    <property type="evidence" value="ECO:0000315"/>
    <property type="project" value="EcoCyc"/>
</dbReference>
<dbReference type="GO" id="GO:0042245">
    <property type="term" value="P:RNA repair"/>
    <property type="evidence" value="ECO:0000315"/>
    <property type="project" value="EcoCyc"/>
</dbReference>
<dbReference type="FunFam" id="3.40.50.880:FF:000026">
    <property type="entry name" value="Protein/nucleic acid deglycase HchA"/>
    <property type="match status" value="1"/>
</dbReference>
<dbReference type="Gene3D" id="3.40.50.880">
    <property type="match status" value="1"/>
</dbReference>
<dbReference type="HAMAP" id="MF_01046">
    <property type="entry name" value="Deglycase_HchA"/>
    <property type="match status" value="1"/>
</dbReference>
<dbReference type="InterPro" id="IPR029062">
    <property type="entry name" value="Class_I_gatase-like"/>
</dbReference>
<dbReference type="InterPro" id="IPR017283">
    <property type="entry name" value="HchA"/>
</dbReference>
<dbReference type="InterPro" id="IPR050325">
    <property type="entry name" value="Prot/Nucl_acid_deglycase"/>
</dbReference>
<dbReference type="NCBIfam" id="NF003168">
    <property type="entry name" value="PRK04155.1"/>
    <property type="match status" value="1"/>
</dbReference>
<dbReference type="PANTHER" id="PTHR48094">
    <property type="entry name" value="PROTEIN/NUCLEIC ACID DEGLYCASE DJ-1-RELATED"/>
    <property type="match status" value="1"/>
</dbReference>
<dbReference type="PANTHER" id="PTHR48094:SF20">
    <property type="entry name" value="PROTEIN_NUCLEIC ACID DEGLYCASE 1"/>
    <property type="match status" value="1"/>
</dbReference>
<dbReference type="PIRSF" id="PIRSF037798">
    <property type="entry name" value="Chaperone_HchA"/>
    <property type="match status" value="1"/>
</dbReference>
<dbReference type="SUPFAM" id="SSF52317">
    <property type="entry name" value="Class I glutamine amidotransferase-like"/>
    <property type="match status" value="1"/>
</dbReference>
<sequence length="283" mass="31190">MTVQTSKNPQVDIAEDNAFFPSEYSLSQYTSPVSDLDGVDYPKPYRGKHKILVIAADERYLPTDNGKLFSTGNHPIETLLPLYHLHAAGFEFEVATISGLMTKFEYWAMPHKDEKVMPFFEQHKSLFRNPKKLADVVASLNADSEYAAIFVPGGHGALIGLPESQDVAAALQWAIKNDRFVISLCHGPAAFLALRHGDNPLNGYSICAFPDAADKQTPEIGYMPGHLTWYFGEELKKMGMNIINDDITGRVHKDRKLLTGDSPFAANALGKLAAQEMLAAYAG</sequence>
<proteinExistence type="evidence at protein level"/>
<accession>P31658</accession>
<accession>P76338</accession>
<feature type="initiator methionine" description="Removed" evidence="16">
    <location>
        <position position="1"/>
    </location>
</feature>
<feature type="chain" id="PRO_0000209412" description="Protein/nucleic acid deglycase 1">
    <location>
        <begin position="2"/>
        <end position="283"/>
    </location>
</feature>
<feature type="active site" description="Nucleophile" evidence="22">
    <location>
        <position position="185"/>
    </location>
</feature>
<feature type="binding site" evidence="5">
    <location>
        <position position="86"/>
    </location>
    <ligand>
        <name>Zn(2+)</name>
        <dbReference type="ChEBI" id="CHEBI:29105"/>
    </ligand>
</feature>
<feature type="binding site" evidence="5">
    <location>
        <position position="91"/>
    </location>
    <ligand>
        <name>Zn(2+)</name>
        <dbReference type="ChEBI" id="CHEBI:29105"/>
    </ligand>
</feature>
<feature type="binding site" evidence="5">
    <location>
        <position position="123"/>
    </location>
    <ligand>
        <name>Zn(2+)</name>
        <dbReference type="ChEBI" id="CHEBI:29105"/>
    </ligand>
</feature>
<feature type="mutagenesis site" description="Loss of glyoxalase activity." evidence="11">
    <original>E</original>
    <variation>A</variation>
    <location>
        <position position="77"/>
    </location>
</feature>
<feature type="mutagenesis site" description="Loss of glyoxalase and aminopeptidase activities." evidence="4 8 11">
    <original>C</original>
    <variation>A</variation>
    <location>
        <position position="185"/>
    </location>
</feature>
<feature type="mutagenesis site" description="Shows approximately 17% remaining glyoxalase activity compared with that of the wild-type." evidence="11">
    <original>H</original>
    <variation>A</variation>
    <location>
        <position position="186"/>
    </location>
</feature>
<feature type="strand" evidence="33">
    <location>
        <begin position="8"/>
        <end position="11"/>
    </location>
</feature>
<feature type="strand" evidence="34">
    <location>
        <begin position="18"/>
        <end position="20"/>
    </location>
</feature>
<feature type="helix" evidence="34">
    <location>
        <begin position="23"/>
        <end position="29"/>
    </location>
</feature>
<feature type="strand" evidence="34">
    <location>
        <begin position="50"/>
        <end position="54"/>
    </location>
</feature>
<feature type="strand" evidence="34">
    <location>
        <begin position="60"/>
        <end position="62"/>
    </location>
</feature>
<feature type="strand" evidence="34">
    <location>
        <begin position="68"/>
        <end position="70"/>
    </location>
</feature>
<feature type="helix" evidence="34">
    <location>
        <begin position="75"/>
        <end position="87"/>
    </location>
</feature>
<feature type="strand" evidence="34">
    <location>
        <begin position="92"/>
        <end position="99"/>
    </location>
</feature>
<feature type="helix" evidence="34">
    <location>
        <begin position="106"/>
        <end position="108"/>
    </location>
</feature>
<feature type="helix" evidence="34">
    <location>
        <begin position="116"/>
        <end position="128"/>
    </location>
</feature>
<feature type="helix" evidence="34">
    <location>
        <begin position="133"/>
        <end position="138"/>
    </location>
</feature>
<feature type="strand" evidence="34">
    <location>
        <begin position="145"/>
        <end position="151"/>
    </location>
</feature>
<feature type="helix" evidence="34">
    <location>
        <begin position="155"/>
        <end position="158"/>
    </location>
</feature>
<feature type="helix" evidence="34">
    <location>
        <begin position="161"/>
        <end position="163"/>
    </location>
</feature>
<feature type="helix" evidence="34">
    <location>
        <begin position="165"/>
        <end position="176"/>
    </location>
</feature>
<feature type="strand" evidence="34">
    <location>
        <begin position="180"/>
        <end position="184"/>
    </location>
</feature>
<feature type="helix" evidence="34">
    <location>
        <begin position="187"/>
        <end position="194"/>
    </location>
</feature>
<feature type="strand" evidence="35">
    <location>
        <begin position="195"/>
        <end position="197"/>
    </location>
</feature>
<feature type="turn" evidence="34">
    <location>
        <begin position="200"/>
        <end position="203"/>
    </location>
</feature>
<feature type="helix" evidence="34">
    <location>
        <begin position="211"/>
        <end position="215"/>
    </location>
</feature>
<feature type="turn" evidence="34">
    <location>
        <begin position="216"/>
        <end position="221"/>
    </location>
</feature>
<feature type="strand" evidence="34">
    <location>
        <begin position="222"/>
        <end position="225"/>
    </location>
</feature>
<feature type="strand" evidence="32">
    <location>
        <begin position="227"/>
        <end position="229"/>
    </location>
</feature>
<feature type="helix" evidence="34">
    <location>
        <begin position="231"/>
        <end position="237"/>
    </location>
</feature>
<feature type="strand" evidence="34">
    <location>
        <begin position="251"/>
        <end position="254"/>
    </location>
</feature>
<feature type="strand" evidence="34">
    <location>
        <begin position="257"/>
        <end position="262"/>
    </location>
</feature>
<feature type="helix" evidence="34">
    <location>
        <begin position="263"/>
        <end position="265"/>
    </location>
</feature>
<feature type="helix" evidence="34">
    <location>
        <begin position="266"/>
        <end position="281"/>
    </location>
</feature>
<comment type="function">
    <text evidence="2 3 6 8 9 10 11 12 13 14 15">Protein and nucleotide deglycase that catalyzes the deglycation of the Maillard adducts formed between amino groups of proteins or nucleotides and reactive carbonyl groups of glyoxals (PubMed:26102038, PubMed:26774339, PubMed:28596309). Thus, functions as a protein deglycase that repairs methylglyoxal- and glyoxal-glycated proteins, and releases repaired proteins and lactate or glycolate, respectively. Deglycates cysteine, arginine and lysine residues in proteins, and thus reactivates these proteins by reversing glycation by glyoxals. Is able to repair glycated serum albumin, aspartate aminotransferase, glyceraldehyde-3-phosphate dehydrogenase, and fructose biphosphate aldolase. Acts on early glycation intermediates (hemithioacetals and aminocarbinols), preventing the formation of Schiff bases and advanced glycation endproducts (AGE) that cause irreversible damage (PubMed:26102038, PubMed:26774339). Also functions as a nucleotide deglycase able to repair glycated guanine in the free nucleotide pool (GTP, GDP, GMP, dGTP) and in DNA and RNA. Is thus involved in a major nucleotide repair system named guanine glycation repair (GG repair), dedicated to reversing methylglyoxal and glyoxal damage via nucleotide sanitization and direct nucleic acid repair (PubMed:28596309). Has been reported to display chaperone, peptidase and glutathione-independent glyoxalase activities (PubMed:12235139, PubMed:12565879, PubMed:14731284, PubMed:15550391, PubMed:21696459, PubMed:7848303). However, these apparently disparate activities are all recruited to execute its protein deglycase primary function (PubMed:26102038, PubMed:26774339). Plays an important role in protecting cells from carbonyl stress, severe heat shock and starvation, as well as in acid resistance of stationary-phase cells (PubMed:12235139, PubMed:16796689, PubMed:17158627).</text>
</comment>
<comment type="catalytic activity">
    <reaction evidence="11 15">
        <text>methylglyoxal + H2O = (R)-lactate + H(+)</text>
        <dbReference type="Rhea" id="RHEA:27754"/>
        <dbReference type="ChEBI" id="CHEBI:15377"/>
        <dbReference type="ChEBI" id="CHEBI:15378"/>
        <dbReference type="ChEBI" id="CHEBI:16004"/>
        <dbReference type="ChEBI" id="CHEBI:17158"/>
        <dbReference type="EC" id="4.2.1.130"/>
    </reaction>
</comment>
<comment type="catalytic activity">
    <reaction evidence="12 25">
        <text>N(omega)-(1-hydroxy-2-oxopropyl)-L-arginyl-[protein] + H2O = lactate + L-arginyl-[protein] + H(+)</text>
        <dbReference type="Rhea" id="RHEA:49548"/>
        <dbReference type="Rhea" id="RHEA-COMP:10532"/>
        <dbReference type="Rhea" id="RHEA-COMP:12428"/>
        <dbReference type="ChEBI" id="CHEBI:15377"/>
        <dbReference type="ChEBI" id="CHEBI:15378"/>
        <dbReference type="ChEBI" id="CHEBI:24996"/>
        <dbReference type="ChEBI" id="CHEBI:29965"/>
        <dbReference type="ChEBI" id="CHEBI:131708"/>
        <dbReference type="EC" id="3.5.1.124"/>
    </reaction>
</comment>
<comment type="catalytic activity">
    <reaction evidence="12 13">
        <text>N(6)-(1-hydroxy-2-oxopropyl)-L-lysyl-[protein] + H2O = lactate + L-lysyl-[protein] + H(+)</text>
        <dbReference type="Rhea" id="RHEA:49552"/>
        <dbReference type="Rhea" id="RHEA-COMP:9752"/>
        <dbReference type="Rhea" id="RHEA-COMP:12429"/>
        <dbReference type="ChEBI" id="CHEBI:15377"/>
        <dbReference type="ChEBI" id="CHEBI:15378"/>
        <dbReference type="ChEBI" id="CHEBI:24996"/>
        <dbReference type="ChEBI" id="CHEBI:29969"/>
        <dbReference type="ChEBI" id="CHEBI:131709"/>
        <dbReference type="EC" id="3.5.1.124"/>
    </reaction>
</comment>
<comment type="catalytic activity">
    <reaction evidence="12 13">
        <text>S-(1-hydroxy-2-oxopropyl)-L-cysteinyl-[protein] + H2O = lactate + L-cysteinyl-[protein] + H(+)</text>
        <dbReference type="Rhea" id="RHEA:49556"/>
        <dbReference type="Rhea" id="RHEA-COMP:10131"/>
        <dbReference type="Rhea" id="RHEA-COMP:12430"/>
        <dbReference type="ChEBI" id="CHEBI:15377"/>
        <dbReference type="ChEBI" id="CHEBI:15378"/>
        <dbReference type="ChEBI" id="CHEBI:24996"/>
        <dbReference type="ChEBI" id="CHEBI:29950"/>
        <dbReference type="ChEBI" id="CHEBI:131710"/>
        <dbReference type="EC" id="3.5.1.124"/>
    </reaction>
</comment>
<comment type="catalytic activity">
    <reaction evidence="12 13">
        <text>N(omega)-(1-hydroxy-2-oxoethyl)-L-arginyl-[protein] + H2O = L-arginyl-[protein] + glycolate + H(+)</text>
        <dbReference type="Rhea" id="RHEA:57188"/>
        <dbReference type="Rhea" id="RHEA-COMP:10532"/>
        <dbReference type="Rhea" id="RHEA-COMP:14844"/>
        <dbReference type="ChEBI" id="CHEBI:15377"/>
        <dbReference type="ChEBI" id="CHEBI:15378"/>
        <dbReference type="ChEBI" id="CHEBI:29805"/>
        <dbReference type="ChEBI" id="CHEBI:29965"/>
        <dbReference type="ChEBI" id="CHEBI:141553"/>
        <dbReference type="EC" id="3.5.1.124"/>
    </reaction>
</comment>
<comment type="catalytic activity">
    <reaction evidence="12 13">
        <text>N(6)-(1-hydroxy-2-oxoethyl)-L-lysyl-[protein] + H2O = glycolate + L-lysyl-[protein] + H(+)</text>
        <dbReference type="Rhea" id="RHEA:57192"/>
        <dbReference type="Rhea" id="RHEA-COMP:9752"/>
        <dbReference type="Rhea" id="RHEA-COMP:14845"/>
        <dbReference type="ChEBI" id="CHEBI:15377"/>
        <dbReference type="ChEBI" id="CHEBI:15378"/>
        <dbReference type="ChEBI" id="CHEBI:29805"/>
        <dbReference type="ChEBI" id="CHEBI:29969"/>
        <dbReference type="ChEBI" id="CHEBI:141554"/>
        <dbReference type="EC" id="3.5.1.124"/>
    </reaction>
</comment>
<comment type="catalytic activity">
    <reaction evidence="12 25">
        <text>S-(1-hydroxy-2-oxoethyl)-L-cysteinyl-[protein] + H2O = glycolate + L-cysteinyl-[protein] + H(+)</text>
        <dbReference type="Rhea" id="RHEA:57196"/>
        <dbReference type="Rhea" id="RHEA-COMP:10131"/>
        <dbReference type="Rhea" id="RHEA-COMP:14846"/>
        <dbReference type="ChEBI" id="CHEBI:15377"/>
        <dbReference type="ChEBI" id="CHEBI:15378"/>
        <dbReference type="ChEBI" id="CHEBI:29805"/>
        <dbReference type="ChEBI" id="CHEBI:29950"/>
        <dbReference type="ChEBI" id="CHEBI:141555"/>
        <dbReference type="EC" id="3.5.1.124"/>
    </reaction>
</comment>
<comment type="catalytic activity">
    <reaction evidence="26">
        <text>N(2)-(1-hydroxy-2-oxopropyl)-dGTP + H2O = lactate + dGTP + H(+)</text>
        <dbReference type="Rhea" id="RHEA:57244"/>
        <dbReference type="ChEBI" id="CHEBI:15377"/>
        <dbReference type="ChEBI" id="CHEBI:15378"/>
        <dbReference type="ChEBI" id="CHEBI:24996"/>
        <dbReference type="ChEBI" id="CHEBI:61429"/>
        <dbReference type="ChEBI" id="CHEBI:141569"/>
    </reaction>
</comment>
<comment type="catalytic activity">
    <reaction evidence="14">
        <text>N(2)-(1-hydroxy-2-oxopropyl)-GTP + H2O = lactate + GTP + H(+)</text>
        <dbReference type="Rhea" id="RHEA:57256"/>
        <dbReference type="ChEBI" id="CHEBI:15377"/>
        <dbReference type="ChEBI" id="CHEBI:15378"/>
        <dbReference type="ChEBI" id="CHEBI:24996"/>
        <dbReference type="ChEBI" id="CHEBI:37565"/>
        <dbReference type="ChEBI" id="CHEBI:141570"/>
    </reaction>
</comment>
<comment type="catalytic activity">
    <reaction evidence="26">
        <text>N(2)-(1-hydroxy-2-oxopropyl)-GDP + H2O = lactate + GDP + H(+)</text>
        <dbReference type="Rhea" id="RHEA:57260"/>
        <dbReference type="ChEBI" id="CHEBI:15377"/>
        <dbReference type="ChEBI" id="CHEBI:15378"/>
        <dbReference type="ChEBI" id="CHEBI:24996"/>
        <dbReference type="ChEBI" id="CHEBI:58189"/>
        <dbReference type="ChEBI" id="CHEBI:141573"/>
    </reaction>
</comment>
<comment type="catalytic activity">
    <reaction evidence="26">
        <text>N(2)-(1-hydroxy-2-oxopropyl)-GMP + H2O = lactate + GMP + H(+)</text>
        <dbReference type="Rhea" id="RHEA:57268"/>
        <dbReference type="ChEBI" id="CHEBI:15377"/>
        <dbReference type="ChEBI" id="CHEBI:15378"/>
        <dbReference type="ChEBI" id="CHEBI:24996"/>
        <dbReference type="ChEBI" id="CHEBI:58115"/>
        <dbReference type="ChEBI" id="CHEBI:141575"/>
    </reaction>
</comment>
<comment type="catalytic activity">
    <reaction evidence="26">
        <text>N(2)-(1-hydroxy-2-oxoethyl)-dGTP + H2O = dGTP + glycolate + H(+)</text>
        <dbReference type="Rhea" id="RHEA:57248"/>
        <dbReference type="ChEBI" id="CHEBI:15377"/>
        <dbReference type="ChEBI" id="CHEBI:15378"/>
        <dbReference type="ChEBI" id="CHEBI:29805"/>
        <dbReference type="ChEBI" id="CHEBI:61429"/>
        <dbReference type="ChEBI" id="CHEBI:141572"/>
    </reaction>
</comment>
<comment type="catalytic activity">
    <reaction evidence="26">
        <text>N(2)-(1-hydroxy-2-oxoethyl)-GTP + H2O = glycolate + GTP + H(+)</text>
        <dbReference type="Rhea" id="RHEA:57252"/>
        <dbReference type="ChEBI" id="CHEBI:15377"/>
        <dbReference type="ChEBI" id="CHEBI:15378"/>
        <dbReference type="ChEBI" id="CHEBI:29805"/>
        <dbReference type="ChEBI" id="CHEBI:37565"/>
        <dbReference type="ChEBI" id="CHEBI:141571"/>
    </reaction>
</comment>
<comment type="catalytic activity">
    <reaction evidence="26">
        <text>N(2)-(1-hydroxy-2-oxoethyl)-GDP + H2O = glycolate + GDP + H(+)</text>
        <dbReference type="Rhea" id="RHEA:57264"/>
        <dbReference type="ChEBI" id="CHEBI:15377"/>
        <dbReference type="ChEBI" id="CHEBI:15378"/>
        <dbReference type="ChEBI" id="CHEBI:29805"/>
        <dbReference type="ChEBI" id="CHEBI:58189"/>
        <dbReference type="ChEBI" id="CHEBI:141574"/>
    </reaction>
</comment>
<comment type="catalytic activity">
    <reaction evidence="26">
        <text>N(2)-(1-hydroxy-2-oxoethyl)-GMP + H2O = glycolate + GMP + H(+)</text>
        <dbReference type="Rhea" id="RHEA:57304"/>
        <dbReference type="ChEBI" id="CHEBI:15377"/>
        <dbReference type="ChEBI" id="CHEBI:15378"/>
        <dbReference type="ChEBI" id="CHEBI:29805"/>
        <dbReference type="ChEBI" id="CHEBI:58115"/>
        <dbReference type="ChEBI" id="CHEBI:141576"/>
    </reaction>
</comment>
<comment type="catalytic activity">
    <reaction evidence="26">
        <text>an N(2)-(1-hydroxy-2-oxopropyl)-guanosine in RNA + H2O = a guanosine in RNA + lactate + H(+)</text>
        <dbReference type="Rhea" id="RHEA:57288"/>
        <dbReference type="Rhea" id="RHEA-COMP:14855"/>
        <dbReference type="Rhea" id="RHEA-COMP:14858"/>
        <dbReference type="ChEBI" id="CHEBI:15377"/>
        <dbReference type="ChEBI" id="CHEBI:15378"/>
        <dbReference type="ChEBI" id="CHEBI:24996"/>
        <dbReference type="ChEBI" id="CHEBI:74269"/>
        <dbReference type="ChEBI" id="CHEBI:141580"/>
    </reaction>
</comment>
<comment type="catalytic activity">
    <reaction evidence="26">
        <text>an N(2)-(1-hydroxy-2-oxopropyl)-2'-deoxyguanosine in DNA + H2O = a 2'-deoxyguanosine in DNA + lactate + H(+)</text>
        <dbReference type="Rhea" id="RHEA:57300"/>
        <dbReference type="Rhea" id="RHEA-COMP:11367"/>
        <dbReference type="Rhea" id="RHEA-COMP:14856"/>
        <dbReference type="ChEBI" id="CHEBI:15377"/>
        <dbReference type="ChEBI" id="CHEBI:15378"/>
        <dbReference type="ChEBI" id="CHEBI:24996"/>
        <dbReference type="ChEBI" id="CHEBI:85445"/>
        <dbReference type="ChEBI" id="CHEBI:141578"/>
    </reaction>
</comment>
<comment type="catalytic activity">
    <reaction evidence="26">
        <text>an N(2)-(1-hydroxy-2-oxoethyl)-guanosine in RNA + H2O = a guanosine in RNA + glycolate + H(+)</text>
        <dbReference type="Rhea" id="RHEA:57292"/>
        <dbReference type="Rhea" id="RHEA-COMP:14855"/>
        <dbReference type="Rhea" id="RHEA-COMP:14859"/>
        <dbReference type="ChEBI" id="CHEBI:15377"/>
        <dbReference type="ChEBI" id="CHEBI:15378"/>
        <dbReference type="ChEBI" id="CHEBI:29805"/>
        <dbReference type="ChEBI" id="CHEBI:74269"/>
        <dbReference type="ChEBI" id="CHEBI:141581"/>
    </reaction>
</comment>
<comment type="catalytic activity">
    <reaction evidence="26">
        <text>an N(2)-(1-hydroxy-2-oxoethyl)-2'-deoxyguanosine in DNA + H2O = a 2'-deoxyguanosine in DNA + glycolate + H(+)</text>
        <dbReference type="Rhea" id="RHEA:57296"/>
        <dbReference type="Rhea" id="RHEA-COMP:11367"/>
        <dbReference type="Rhea" id="RHEA-COMP:14857"/>
        <dbReference type="ChEBI" id="CHEBI:15377"/>
        <dbReference type="ChEBI" id="CHEBI:15378"/>
        <dbReference type="ChEBI" id="CHEBI:29805"/>
        <dbReference type="ChEBI" id="CHEBI:85445"/>
        <dbReference type="ChEBI" id="CHEBI:141579"/>
    </reaction>
</comment>
<comment type="activity regulation">
    <text evidence="2 8 11 15">The glyoxalase activity is inhibited by copper and zinc cations, activated by ferrous cations, and inactivated by thiol-blocking reagents (PubMed:21696459, PubMed:7848303). The aminopeptidase activity is inhibited by iodoacetamide, dithiothreitol, EDTA and 1, 10-phenanthroline (PubMed:15550391). Binding of ATP at high temperatures induces a conformational change that reduces HchA surface hydrophobicity, interferes with its ability to capture substrate proteins and inhibits chaperone activity (PubMed:12235139).</text>
</comment>
<comment type="biophysicochemical properties">
    <kinetics>
        <KM evidence="8">55 uM for Lys-AMC (at 37 degrees Celsius and pH 8.5)</KM>
        <KM evidence="8">95 uM for Arg-AMC (at 37 degrees Celsius and pH 8.5)</KM>
        <KM evidence="8">120 uM for Ala-AMC (at 37 degrees Celsius and pH 8.5)</KM>
        <KM evidence="11">1.43 mM for methylglyoxal</KM>
        <text evidence="8 11">kcat is 156.9 min(-1) for glyoxalase activity with methylglyoxal as substrate (PubMed:21696459). kcat is 0.43 min(-1) for aminopeptidase activity with Lys-AMC as substrate. kcat is 0.51 min(-1) for aminopeptidase activity with Arg-AMC as substrate. kcat is 1.1 min(-1) for aminopeptidase activity with Ala-AMC as substrate (PubMed:15550391).</text>
    </kinetics>
    <phDependence>
        <text evidence="8 11 15">Optimum pH is between 6 and 8 for glyoxalase activity (PubMed:21696459, PubMed:7848303). Significant inhibition of glyoxalase activity below pH 5 (PubMed:21696459). Optimum pH is 8 for aminopeptidase activity (PubMed:15550391).</text>
    </phDependence>
    <temperatureDependence>
        <text evidence="8 11">Optimum temperature for glyoxalase activity is around 37 degrees Celsius (PubMed:21696459). Optimum temperature for aminopeptidase activity is around 43 degrees Celsius (PubMed:15550391).</text>
    </temperatureDependence>
</comment>
<comment type="subunit">
    <text evidence="2 3 15">Homodimer.</text>
</comment>
<comment type="interaction">
    <interactant intactId="EBI-909144">
        <id>P31658</id>
    </interactant>
    <interactant intactId="EBI-1133670">
        <id>P0ACI6</id>
        <label>asnC</label>
    </interactant>
    <organismsDiffer>false</organismsDiffer>
    <experiments>2</experiments>
</comment>
<comment type="subcellular location">
    <subcellularLocation>
        <location>Cytoplasm</location>
    </subcellularLocation>
</comment>
<comment type="induction">
    <text>By heat shock.</text>
</comment>
<comment type="domain">
    <text evidence="7">Consists of a large A domain and a smaller P domain connected by a linker. The thermally induced motion of the flexible linker-loop region leads to the uncovering of a high-affinity substrate-binding site that is essential to capture nonnative proteins at high temperatures.</text>
</comment>
<comment type="disruption phenotype">
    <text evidence="6 8 11 12 13 14">Cells lacking this gene show a loss of glyoxalase and reduction in aminopeptidase activity (PubMed:15550391, PubMed:21696459). They accumulate methylglyoxal and are more susceptible to methylglyoxal than the parent strain (PubMed:21696459). Cells exhibit growth defects above 48 degrees Celsius and accumulate higher levels of peptides than wild-type (PubMed:14731284, PubMed:15550391). They display increased protein and DNA/RNA glycation levels, and exhibit strong mutator phenotypes (PubMed:26102038, PubMed:28596309). Moreover, the double and triple mutants lacking yhbO and yajL, and yhbO, yajL and hchA, respectively, display impressive amounts of glycated proteins, suggesting that the YhbO, YajL and Hsp31 deglycases display relatively redundant functions (PubMed:26774339). The triple mutant displays higher glycation levels of free nucleotides (GTP and dGTP) than the parental strain, and shows higher glycation levels of DNA and RNA than those of single mutants (PubMed:28596309). The hchA mutant cells show decreased viability in methylglyoxal- or glucose-containing media (PubMed:26774339).</text>
</comment>
<comment type="miscellaneous">
    <text evidence="23 24">According to some authors, HchA exhibits an exceedingly weak proteolytic activity against bovine serum albumin (BSA) and some peptidase activity against small single amino acids conjugated to a fluorogenic reporter (PubMed:12939276). Another report showed that HchA does not display any significant proteolytic activity but displays a physiologically relevant aminopeptidase activity (PubMed:15550391).</text>
</comment>
<comment type="similarity">
    <text evidence="1">Belongs to the peptidase C56 family. HchA subfamily.</text>
</comment>
<comment type="caution">
    <text evidence="22">The protein deglycation activity has been ascribed to a TRIS buffer artifact by a publication (PubMed:27903648), which has then been rebutted by clear biochemical experiments showing that DJ-1 family deglycases are bona fide deglycases (PubMed:28013050). Deglycase activity is further strengthened by a novel article that reports nucleotide deglycation activity (PubMed:28596309).</text>
</comment>
<gene>
    <name type="primary">hchA</name>
    <name type="synonym">yedU</name>
    <name type="synonym">yzzC</name>
    <name type="ordered locus">b1967</name>
    <name type="ordered locus">JW1950</name>
</gene>